<name>RL5_CALS4</name>
<comment type="function">
    <text evidence="1">This is one of the proteins that bind and probably mediate the attachment of the 5S RNA into the large ribosomal subunit, where it forms part of the central protuberance. In the 70S ribosome it contacts protein S13 of the 30S subunit (bridge B1b), connecting the 2 subunits; this bridge is implicated in subunit movement. Contacts the P site tRNA; the 5S rRNA and some of its associated proteins might help stabilize positioning of ribosome-bound tRNAs.</text>
</comment>
<comment type="subunit">
    <text evidence="1">Part of the 50S ribosomal subunit; part of the 5S rRNA/L5/L18/L25 subcomplex. Contacts the 5S rRNA and the P site tRNA. Forms a bridge to the 30S subunit in the 70S ribosome.</text>
</comment>
<comment type="similarity">
    <text evidence="1">Belongs to the universal ribosomal protein uL5 family.</text>
</comment>
<sequence>MSRLREKYEKEVVPALMERFGYKNIMQVPKLEKVVINIGVGEAKENPKALEAAMNDLMMISGQKPVITRAKKSISNFKIRKGMPIGVKVTLRRERMYEFLDKLFNIALPRVRDFKGVSPNSFDGRGNYALGVREQLIFPEIDYDKIDKVRGMDIIIVTTAKTDEEAKALLELLGMPFAK</sequence>
<gene>
    <name evidence="1" type="primary">rplE</name>
    <name type="ordered locus">TTE2279</name>
</gene>
<keyword id="KW-1185">Reference proteome</keyword>
<keyword id="KW-0687">Ribonucleoprotein</keyword>
<keyword id="KW-0689">Ribosomal protein</keyword>
<keyword id="KW-0694">RNA-binding</keyword>
<keyword id="KW-0699">rRNA-binding</keyword>
<keyword id="KW-0820">tRNA-binding</keyword>
<organism>
    <name type="scientific">Caldanaerobacter subterraneus subsp. tengcongensis (strain DSM 15242 / JCM 11007 / NBRC 100824 / MB4)</name>
    <name type="common">Thermoanaerobacter tengcongensis</name>
    <dbReference type="NCBI Taxonomy" id="273068"/>
    <lineage>
        <taxon>Bacteria</taxon>
        <taxon>Bacillati</taxon>
        <taxon>Bacillota</taxon>
        <taxon>Clostridia</taxon>
        <taxon>Thermoanaerobacterales</taxon>
        <taxon>Thermoanaerobacteraceae</taxon>
        <taxon>Caldanaerobacter</taxon>
    </lineage>
</organism>
<dbReference type="EMBL" id="AE008691">
    <property type="protein sequence ID" value="AAM25423.1"/>
    <property type="molecule type" value="Genomic_DNA"/>
</dbReference>
<dbReference type="RefSeq" id="WP_011026326.1">
    <property type="nucleotide sequence ID" value="NC_003869.1"/>
</dbReference>
<dbReference type="SMR" id="Q8R7W6"/>
<dbReference type="STRING" id="273068.TTE2279"/>
<dbReference type="KEGG" id="tte:TTE2279"/>
<dbReference type="eggNOG" id="COG0094">
    <property type="taxonomic scope" value="Bacteria"/>
</dbReference>
<dbReference type="HOGENOM" id="CLU_061015_2_1_9"/>
<dbReference type="OrthoDB" id="9806626at2"/>
<dbReference type="Proteomes" id="UP000000555">
    <property type="component" value="Chromosome"/>
</dbReference>
<dbReference type="GO" id="GO:1990904">
    <property type="term" value="C:ribonucleoprotein complex"/>
    <property type="evidence" value="ECO:0007669"/>
    <property type="project" value="UniProtKB-KW"/>
</dbReference>
<dbReference type="GO" id="GO:0005840">
    <property type="term" value="C:ribosome"/>
    <property type="evidence" value="ECO:0007669"/>
    <property type="project" value="UniProtKB-KW"/>
</dbReference>
<dbReference type="GO" id="GO:0019843">
    <property type="term" value="F:rRNA binding"/>
    <property type="evidence" value="ECO:0007669"/>
    <property type="project" value="UniProtKB-UniRule"/>
</dbReference>
<dbReference type="GO" id="GO:0003735">
    <property type="term" value="F:structural constituent of ribosome"/>
    <property type="evidence" value="ECO:0007669"/>
    <property type="project" value="InterPro"/>
</dbReference>
<dbReference type="GO" id="GO:0000049">
    <property type="term" value="F:tRNA binding"/>
    <property type="evidence" value="ECO:0007669"/>
    <property type="project" value="UniProtKB-UniRule"/>
</dbReference>
<dbReference type="GO" id="GO:0006412">
    <property type="term" value="P:translation"/>
    <property type="evidence" value="ECO:0007669"/>
    <property type="project" value="UniProtKB-UniRule"/>
</dbReference>
<dbReference type="FunFam" id="3.30.1440.10:FF:000001">
    <property type="entry name" value="50S ribosomal protein L5"/>
    <property type="match status" value="1"/>
</dbReference>
<dbReference type="Gene3D" id="3.30.1440.10">
    <property type="match status" value="1"/>
</dbReference>
<dbReference type="HAMAP" id="MF_01333_B">
    <property type="entry name" value="Ribosomal_uL5_B"/>
    <property type="match status" value="1"/>
</dbReference>
<dbReference type="InterPro" id="IPR002132">
    <property type="entry name" value="Ribosomal_uL5"/>
</dbReference>
<dbReference type="InterPro" id="IPR020930">
    <property type="entry name" value="Ribosomal_uL5_bac-type"/>
</dbReference>
<dbReference type="InterPro" id="IPR031309">
    <property type="entry name" value="Ribosomal_uL5_C"/>
</dbReference>
<dbReference type="InterPro" id="IPR020929">
    <property type="entry name" value="Ribosomal_uL5_CS"/>
</dbReference>
<dbReference type="InterPro" id="IPR022803">
    <property type="entry name" value="Ribosomal_uL5_dom_sf"/>
</dbReference>
<dbReference type="InterPro" id="IPR031310">
    <property type="entry name" value="Ribosomal_uL5_N"/>
</dbReference>
<dbReference type="NCBIfam" id="NF000585">
    <property type="entry name" value="PRK00010.1"/>
    <property type="match status" value="1"/>
</dbReference>
<dbReference type="PANTHER" id="PTHR11994">
    <property type="entry name" value="60S RIBOSOMAL PROTEIN L11-RELATED"/>
    <property type="match status" value="1"/>
</dbReference>
<dbReference type="Pfam" id="PF00281">
    <property type="entry name" value="Ribosomal_L5"/>
    <property type="match status" value="1"/>
</dbReference>
<dbReference type="Pfam" id="PF00673">
    <property type="entry name" value="Ribosomal_L5_C"/>
    <property type="match status" value="1"/>
</dbReference>
<dbReference type="PIRSF" id="PIRSF002161">
    <property type="entry name" value="Ribosomal_L5"/>
    <property type="match status" value="1"/>
</dbReference>
<dbReference type="SUPFAM" id="SSF55282">
    <property type="entry name" value="RL5-like"/>
    <property type="match status" value="1"/>
</dbReference>
<dbReference type="PROSITE" id="PS00358">
    <property type="entry name" value="RIBOSOMAL_L5"/>
    <property type="match status" value="1"/>
</dbReference>
<accession>Q8R7W6</accession>
<feature type="chain" id="PRO_0000125016" description="Large ribosomal subunit protein uL5">
    <location>
        <begin position="1"/>
        <end position="179"/>
    </location>
</feature>
<evidence type="ECO:0000255" key="1">
    <source>
        <dbReference type="HAMAP-Rule" id="MF_01333"/>
    </source>
</evidence>
<evidence type="ECO:0000305" key="2"/>
<proteinExistence type="inferred from homology"/>
<reference key="1">
    <citation type="journal article" date="2002" name="Genome Res.">
        <title>A complete sequence of the T. tengcongensis genome.</title>
        <authorList>
            <person name="Bao Q."/>
            <person name="Tian Y."/>
            <person name="Li W."/>
            <person name="Xu Z."/>
            <person name="Xuan Z."/>
            <person name="Hu S."/>
            <person name="Dong W."/>
            <person name="Yang J."/>
            <person name="Chen Y."/>
            <person name="Xue Y."/>
            <person name="Xu Y."/>
            <person name="Lai X."/>
            <person name="Huang L."/>
            <person name="Dong X."/>
            <person name="Ma Y."/>
            <person name="Ling L."/>
            <person name="Tan H."/>
            <person name="Chen R."/>
            <person name="Wang J."/>
            <person name="Yu J."/>
            <person name="Yang H."/>
        </authorList>
    </citation>
    <scope>NUCLEOTIDE SEQUENCE [LARGE SCALE GENOMIC DNA]</scope>
    <source>
        <strain>DSM 15242 / JCM 11007 / NBRC 100824 / MB4</strain>
    </source>
</reference>
<protein>
    <recommendedName>
        <fullName evidence="1">Large ribosomal subunit protein uL5</fullName>
    </recommendedName>
    <alternativeName>
        <fullName evidence="2">50S ribosomal protein L5</fullName>
    </alternativeName>
</protein>